<keyword id="KW-0106">Calcium</keyword>
<keyword id="KW-0460">Magnesium</keyword>
<keyword id="KW-0479">Metal-binding</keyword>
<keyword id="KW-1185">Reference proteome</keyword>
<keyword id="KW-0786">Thiamine pyrophosphate</keyword>
<keyword id="KW-0808">Transferase</keyword>
<gene>
    <name type="primary">tkt</name>
    <name type="ordered locus">BH2352</name>
</gene>
<sequence length="666" mass="72113">MSKHVEQLAVNTIRTLSIDSVEKANSGHPGMPMGAAPMAFCLWTKFMNHNPANPDWVNRDRFVLSAGHGSMLLYSLLHLTGYDLSLEELQNFRQWGSKTPGHPEYGHTPGVEATTGPLGQGVAMAVGMAMAERHLAATYNRDGYNIVDHYTYTICGDGDLMEGVSAEAASLAGHLKLGRMILLYDSNDISLDGDLHHSFSESVEDRFKAYGWHVVRVEDGNNLDEIAKAIEEAKADERPSLIEVKTTIGFGSPNKGGKSVSHGAPLGADEVKLTKEAYEWTYENEFHIPEEVAAYYEQVKQQGAEKEESWNELFAQYKKAYPELASQFELAVHGDLPEGWDAVAPSYEVGKSVATRSSSGEALNAFAKTVPQLFGGSADLASSNKTLIKGEANFSRDDYSGRNVWFGVREFAMGAAMNGMALHGGLKVFGATFFVFSDYLRPAIRLAALMQLPVIYVFTHDSIAVGEDGPTHEPVEQLASLRAMPGLSVIRPADGNESVAAWKLALESKDQPTALVLSRQNLPTLEGAVDRAYDGVSKGAYVLAPANGSADLLLLASGSEVSLAVNAKEALEKEGIHAAVVSMPSWDRFEAQSAEYKEEVLPSDVTARLAIEMGSSLGWAKYVGNQGDVVAIDRFGASAPGERIMEEFGFTVQHVVARAKALLENK</sequence>
<name>TKT_HALH5</name>
<protein>
    <recommendedName>
        <fullName>Transketolase</fullName>
        <shortName>TK</shortName>
        <ecNumber>2.2.1.1</ecNumber>
    </recommendedName>
</protein>
<proteinExistence type="inferred from homology"/>
<feature type="chain" id="PRO_0000191851" description="Transketolase">
    <location>
        <begin position="1"/>
        <end position="666"/>
    </location>
</feature>
<feature type="active site" description="Proton donor" evidence="1">
    <location>
        <position position="410"/>
    </location>
</feature>
<feature type="binding site" evidence="1">
    <location>
        <position position="28"/>
    </location>
    <ligand>
        <name>substrate</name>
    </ligand>
</feature>
<feature type="binding site" evidence="1">
    <location>
        <position position="68"/>
    </location>
    <ligand>
        <name>thiamine diphosphate</name>
        <dbReference type="ChEBI" id="CHEBI:58937"/>
    </ligand>
</feature>
<feature type="binding site" evidence="1">
    <location>
        <begin position="116"/>
        <end position="118"/>
    </location>
    <ligand>
        <name>thiamine diphosphate</name>
        <dbReference type="ChEBI" id="CHEBI:58937"/>
    </ligand>
</feature>
<feature type="binding site" evidence="1">
    <location>
        <position position="157"/>
    </location>
    <ligand>
        <name>Mg(2+)</name>
        <dbReference type="ChEBI" id="CHEBI:18420"/>
    </ligand>
</feature>
<feature type="binding site" evidence="1">
    <location>
        <position position="158"/>
    </location>
    <ligand>
        <name>thiamine diphosphate</name>
        <dbReference type="ChEBI" id="CHEBI:58937"/>
    </ligand>
</feature>
<feature type="binding site" evidence="1">
    <location>
        <position position="187"/>
    </location>
    <ligand>
        <name>Mg(2+)</name>
        <dbReference type="ChEBI" id="CHEBI:18420"/>
    </ligand>
</feature>
<feature type="binding site" evidence="1">
    <location>
        <position position="187"/>
    </location>
    <ligand>
        <name>thiamine diphosphate</name>
        <dbReference type="ChEBI" id="CHEBI:58937"/>
    </ligand>
</feature>
<feature type="binding site" evidence="1">
    <location>
        <position position="189"/>
    </location>
    <ligand>
        <name>Mg(2+)</name>
        <dbReference type="ChEBI" id="CHEBI:18420"/>
    </ligand>
</feature>
<feature type="binding site" evidence="1">
    <location>
        <position position="262"/>
    </location>
    <ligand>
        <name>substrate</name>
    </ligand>
</feature>
<feature type="binding site" evidence="1">
    <location>
        <position position="262"/>
    </location>
    <ligand>
        <name>thiamine diphosphate</name>
        <dbReference type="ChEBI" id="CHEBI:58937"/>
    </ligand>
</feature>
<feature type="binding site" evidence="1">
    <location>
        <position position="356"/>
    </location>
    <ligand>
        <name>substrate</name>
    </ligand>
</feature>
<feature type="binding site" evidence="1">
    <location>
        <position position="383"/>
    </location>
    <ligand>
        <name>substrate</name>
    </ligand>
</feature>
<feature type="binding site" evidence="1">
    <location>
        <position position="436"/>
    </location>
    <ligand>
        <name>thiamine diphosphate</name>
        <dbReference type="ChEBI" id="CHEBI:58937"/>
    </ligand>
</feature>
<feature type="binding site" evidence="1">
    <location>
        <position position="460"/>
    </location>
    <ligand>
        <name>substrate</name>
    </ligand>
</feature>
<feature type="binding site" evidence="1">
    <location>
        <position position="468"/>
    </location>
    <ligand>
        <name>substrate</name>
    </ligand>
</feature>
<feature type="binding site" evidence="1">
    <location>
        <position position="519"/>
    </location>
    <ligand>
        <name>substrate</name>
    </ligand>
</feature>
<feature type="site" description="Important for catalytic activity" evidence="1">
    <location>
        <position position="28"/>
    </location>
</feature>
<feature type="site" description="Important for catalytic activity" evidence="1">
    <location>
        <position position="262"/>
    </location>
</feature>
<reference key="1">
    <citation type="journal article" date="2000" name="Nucleic Acids Res.">
        <title>Complete genome sequence of the alkaliphilic bacterium Bacillus halodurans and genomic sequence comparison with Bacillus subtilis.</title>
        <authorList>
            <person name="Takami H."/>
            <person name="Nakasone K."/>
            <person name="Takaki Y."/>
            <person name="Maeno G."/>
            <person name="Sasaki R."/>
            <person name="Masui N."/>
            <person name="Fuji F."/>
            <person name="Hirama C."/>
            <person name="Nakamura Y."/>
            <person name="Ogasawara N."/>
            <person name="Kuhara S."/>
            <person name="Horikoshi K."/>
        </authorList>
    </citation>
    <scope>NUCLEOTIDE SEQUENCE [LARGE SCALE GENOMIC DNA]</scope>
    <source>
        <strain>ATCC BAA-125 / DSM 18197 / FERM 7344 / JCM 9153 / C-125</strain>
    </source>
</reference>
<organism>
    <name type="scientific">Halalkalibacterium halodurans (strain ATCC BAA-125 / DSM 18197 / FERM 7344 / JCM 9153 / C-125)</name>
    <name type="common">Bacillus halodurans</name>
    <dbReference type="NCBI Taxonomy" id="272558"/>
    <lineage>
        <taxon>Bacteria</taxon>
        <taxon>Bacillati</taxon>
        <taxon>Bacillota</taxon>
        <taxon>Bacilli</taxon>
        <taxon>Bacillales</taxon>
        <taxon>Bacillaceae</taxon>
        <taxon>Halalkalibacterium (ex Joshi et al. 2022)</taxon>
    </lineage>
</organism>
<dbReference type="EC" id="2.2.1.1"/>
<dbReference type="EMBL" id="BA000004">
    <property type="protein sequence ID" value="BAB06071.1"/>
    <property type="molecule type" value="Genomic_DNA"/>
</dbReference>
<dbReference type="PIR" id="H83943">
    <property type="entry name" value="H83943"/>
</dbReference>
<dbReference type="RefSeq" id="WP_010898506.1">
    <property type="nucleotide sequence ID" value="NC_002570.2"/>
</dbReference>
<dbReference type="SMR" id="Q9KAD7"/>
<dbReference type="STRING" id="272558.gene:10728250"/>
<dbReference type="KEGG" id="bha:BH2352"/>
<dbReference type="eggNOG" id="COG0021">
    <property type="taxonomic scope" value="Bacteria"/>
</dbReference>
<dbReference type="HOGENOM" id="CLU_009227_0_0_9"/>
<dbReference type="OrthoDB" id="8732661at2"/>
<dbReference type="Proteomes" id="UP000001258">
    <property type="component" value="Chromosome"/>
</dbReference>
<dbReference type="GO" id="GO:0005829">
    <property type="term" value="C:cytosol"/>
    <property type="evidence" value="ECO:0007669"/>
    <property type="project" value="TreeGrafter"/>
</dbReference>
<dbReference type="GO" id="GO:0046872">
    <property type="term" value="F:metal ion binding"/>
    <property type="evidence" value="ECO:0007669"/>
    <property type="project" value="UniProtKB-KW"/>
</dbReference>
<dbReference type="GO" id="GO:0004802">
    <property type="term" value="F:transketolase activity"/>
    <property type="evidence" value="ECO:0007669"/>
    <property type="project" value="UniProtKB-EC"/>
</dbReference>
<dbReference type="GO" id="GO:0006098">
    <property type="term" value="P:pentose-phosphate shunt"/>
    <property type="evidence" value="ECO:0007669"/>
    <property type="project" value="TreeGrafter"/>
</dbReference>
<dbReference type="CDD" id="cd07033">
    <property type="entry name" value="TPP_PYR_DXS_TK_like"/>
    <property type="match status" value="1"/>
</dbReference>
<dbReference type="CDD" id="cd02012">
    <property type="entry name" value="TPP_TK"/>
    <property type="match status" value="1"/>
</dbReference>
<dbReference type="FunFam" id="3.40.50.920:FF:000003">
    <property type="entry name" value="Transketolase"/>
    <property type="match status" value="1"/>
</dbReference>
<dbReference type="FunFam" id="3.40.50.970:FF:000003">
    <property type="entry name" value="Transketolase"/>
    <property type="match status" value="1"/>
</dbReference>
<dbReference type="FunFam" id="3.40.50.970:FF:000004">
    <property type="entry name" value="Transketolase"/>
    <property type="match status" value="1"/>
</dbReference>
<dbReference type="Gene3D" id="3.40.50.920">
    <property type="match status" value="1"/>
</dbReference>
<dbReference type="Gene3D" id="3.40.50.970">
    <property type="match status" value="2"/>
</dbReference>
<dbReference type="InterPro" id="IPR029061">
    <property type="entry name" value="THDP-binding"/>
</dbReference>
<dbReference type="InterPro" id="IPR009014">
    <property type="entry name" value="Transketo_C/PFOR_II"/>
</dbReference>
<dbReference type="InterPro" id="IPR055152">
    <property type="entry name" value="Transketolase-like_C_2"/>
</dbReference>
<dbReference type="InterPro" id="IPR005475">
    <property type="entry name" value="Transketolase-like_Pyr-bd"/>
</dbReference>
<dbReference type="InterPro" id="IPR005478">
    <property type="entry name" value="Transketolase_bac-like"/>
</dbReference>
<dbReference type="InterPro" id="IPR020826">
    <property type="entry name" value="Transketolase_BS"/>
</dbReference>
<dbReference type="InterPro" id="IPR049557">
    <property type="entry name" value="Transketolase_CS"/>
</dbReference>
<dbReference type="InterPro" id="IPR033247">
    <property type="entry name" value="Transketolase_fam"/>
</dbReference>
<dbReference type="InterPro" id="IPR005474">
    <property type="entry name" value="Transketolase_N"/>
</dbReference>
<dbReference type="NCBIfam" id="TIGR00232">
    <property type="entry name" value="tktlase_bact"/>
    <property type="match status" value="1"/>
</dbReference>
<dbReference type="PANTHER" id="PTHR43522">
    <property type="entry name" value="TRANSKETOLASE"/>
    <property type="match status" value="1"/>
</dbReference>
<dbReference type="PANTHER" id="PTHR43522:SF2">
    <property type="entry name" value="TRANSKETOLASE 1-RELATED"/>
    <property type="match status" value="1"/>
</dbReference>
<dbReference type="Pfam" id="PF02779">
    <property type="entry name" value="Transket_pyr"/>
    <property type="match status" value="1"/>
</dbReference>
<dbReference type="Pfam" id="PF22613">
    <property type="entry name" value="Transketolase_C_1"/>
    <property type="match status" value="1"/>
</dbReference>
<dbReference type="Pfam" id="PF00456">
    <property type="entry name" value="Transketolase_N"/>
    <property type="match status" value="1"/>
</dbReference>
<dbReference type="SMART" id="SM00861">
    <property type="entry name" value="Transket_pyr"/>
    <property type="match status" value="1"/>
</dbReference>
<dbReference type="SUPFAM" id="SSF52518">
    <property type="entry name" value="Thiamin diphosphate-binding fold (THDP-binding)"/>
    <property type="match status" value="2"/>
</dbReference>
<dbReference type="SUPFAM" id="SSF52922">
    <property type="entry name" value="TK C-terminal domain-like"/>
    <property type="match status" value="1"/>
</dbReference>
<dbReference type="PROSITE" id="PS00801">
    <property type="entry name" value="TRANSKETOLASE_1"/>
    <property type="match status" value="1"/>
</dbReference>
<dbReference type="PROSITE" id="PS00802">
    <property type="entry name" value="TRANSKETOLASE_2"/>
    <property type="match status" value="1"/>
</dbReference>
<comment type="function">
    <text evidence="1">Catalyzes the transfer of a two-carbon ketol group from a ketose donor to an aldose acceptor, via a covalent intermediate with the cofactor thiamine pyrophosphate.</text>
</comment>
<comment type="catalytic activity">
    <reaction>
        <text>D-sedoheptulose 7-phosphate + D-glyceraldehyde 3-phosphate = aldehydo-D-ribose 5-phosphate + D-xylulose 5-phosphate</text>
        <dbReference type="Rhea" id="RHEA:10508"/>
        <dbReference type="ChEBI" id="CHEBI:57483"/>
        <dbReference type="ChEBI" id="CHEBI:57737"/>
        <dbReference type="ChEBI" id="CHEBI:58273"/>
        <dbReference type="ChEBI" id="CHEBI:59776"/>
        <dbReference type="EC" id="2.2.1.1"/>
    </reaction>
</comment>
<comment type="cofactor">
    <cofactor evidence="1">
        <name>Mg(2+)</name>
        <dbReference type="ChEBI" id="CHEBI:18420"/>
    </cofactor>
    <cofactor evidence="1">
        <name>Ca(2+)</name>
        <dbReference type="ChEBI" id="CHEBI:29108"/>
    </cofactor>
    <cofactor evidence="1">
        <name>Mn(2+)</name>
        <dbReference type="ChEBI" id="CHEBI:29035"/>
    </cofactor>
    <cofactor evidence="1">
        <name>Co(2+)</name>
        <dbReference type="ChEBI" id="CHEBI:48828"/>
    </cofactor>
    <text evidence="1">Binds 1 Mg(2+) ion per subunit. Can also utilize other divalent metal cations, such as Ca(2+), Mn(2+) and Co(2+).</text>
</comment>
<comment type="cofactor">
    <cofactor evidence="1">
        <name>thiamine diphosphate</name>
        <dbReference type="ChEBI" id="CHEBI:58937"/>
    </cofactor>
    <text evidence="1">Binds 1 thiamine pyrophosphate per subunit.</text>
</comment>
<comment type="subunit">
    <text evidence="1">Homodimer.</text>
</comment>
<comment type="similarity">
    <text evidence="2">Belongs to the transketolase family.</text>
</comment>
<evidence type="ECO:0000250" key="1"/>
<evidence type="ECO:0000305" key="2"/>
<accession>Q9KAD7</accession>